<accession>Q99RQ9</accession>
<reference key="1">
    <citation type="journal article" date="2001" name="Lancet">
        <title>Whole genome sequencing of meticillin-resistant Staphylococcus aureus.</title>
        <authorList>
            <person name="Kuroda M."/>
            <person name="Ohta T."/>
            <person name="Uchiyama I."/>
            <person name="Baba T."/>
            <person name="Yuzawa H."/>
            <person name="Kobayashi I."/>
            <person name="Cui L."/>
            <person name="Oguchi A."/>
            <person name="Aoki K."/>
            <person name="Nagai Y."/>
            <person name="Lian J.-Q."/>
            <person name="Ito T."/>
            <person name="Kanamori M."/>
            <person name="Matsumaru H."/>
            <person name="Maruyama A."/>
            <person name="Murakami H."/>
            <person name="Hosoyama A."/>
            <person name="Mizutani-Ui Y."/>
            <person name="Takahashi N.K."/>
            <person name="Sawano T."/>
            <person name="Inoue R."/>
            <person name="Kaito C."/>
            <person name="Sekimizu K."/>
            <person name="Hirakawa H."/>
            <person name="Kuhara S."/>
            <person name="Goto S."/>
            <person name="Yabuzaki J."/>
            <person name="Kanehisa M."/>
            <person name="Yamashita A."/>
            <person name="Oshima K."/>
            <person name="Furuya K."/>
            <person name="Yoshino C."/>
            <person name="Shiba T."/>
            <person name="Hattori M."/>
            <person name="Ogasawara N."/>
            <person name="Hayashi H."/>
            <person name="Hiramatsu K."/>
        </authorList>
    </citation>
    <scope>NUCLEOTIDE SEQUENCE [LARGE SCALE GENOMIC DNA]</scope>
    <source>
        <strain>Mu50 / ATCC 700699</strain>
    </source>
</reference>
<protein>
    <recommendedName>
        <fullName>Uncharacterized lipoprotein SAV2368</fullName>
    </recommendedName>
</protein>
<sequence>MKRLVTGLLALSLFLAACGQDSDQQKDSNKEKDDKAKTEQQDKKTNDSSKDKKDNKDDSKDVNKDNKDNSANDNQQQSNSNATNNDQNQTNNNQSSNNQKSSYVAPYYGQNAAPVARQIYPFNGNKTQALQQLPNFQTALNAANNEANKFGSNNKVYNDYSIEEHNGNYKYVFSFKDPNANGKYSIVTVDYTGQAMVTDPNYQQ</sequence>
<organism>
    <name type="scientific">Staphylococcus aureus (strain Mu50 / ATCC 700699)</name>
    <dbReference type="NCBI Taxonomy" id="158878"/>
    <lineage>
        <taxon>Bacteria</taxon>
        <taxon>Bacillati</taxon>
        <taxon>Bacillota</taxon>
        <taxon>Bacilli</taxon>
        <taxon>Bacillales</taxon>
        <taxon>Staphylococcaceae</taxon>
        <taxon>Staphylococcus</taxon>
    </lineage>
</organism>
<evidence type="ECO:0000255" key="1">
    <source>
        <dbReference type="PROSITE-ProRule" id="PRU00303"/>
    </source>
</evidence>
<evidence type="ECO:0000256" key="2">
    <source>
        <dbReference type="SAM" id="MobiDB-lite"/>
    </source>
</evidence>
<feature type="signal peptide" evidence="1">
    <location>
        <begin position="1"/>
        <end position="17"/>
    </location>
</feature>
<feature type="chain" id="PRO_0000296178" description="Uncharacterized lipoprotein SAV2368">
    <location>
        <begin position="18"/>
        <end position="204"/>
    </location>
</feature>
<feature type="region of interest" description="Disordered" evidence="2">
    <location>
        <begin position="17"/>
        <end position="102"/>
    </location>
</feature>
<feature type="compositionally biased region" description="Basic and acidic residues" evidence="2">
    <location>
        <begin position="23"/>
        <end position="70"/>
    </location>
</feature>
<feature type="compositionally biased region" description="Low complexity" evidence="2">
    <location>
        <begin position="71"/>
        <end position="102"/>
    </location>
</feature>
<feature type="lipid moiety-binding region" description="N-palmitoyl cysteine" evidence="1">
    <location>
        <position position="18"/>
    </location>
</feature>
<feature type="lipid moiety-binding region" description="S-diacylglycerol cysteine" evidence="1">
    <location>
        <position position="18"/>
    </location>
</feature>
<gene>
    <name type="ordered locus">SAV2368</name>
</gene>
<keyword id="KW-1003">Cell membrane</keyword>
<keyword id="KW-0449">Lipoprotein</keyword>
<keyword id="KW-0472">Membrane</keyword>
<keyword id="KW-0564">Palmitate</keyword>
<keyword id="KW-0732">Signal</keyword>
<proteinExistence type="inferred from homology"/>
<comment type="subcellular location">
    <subcellularLocation>
        <location evidence="1">Cell membrane</location>
        <topology evidence="1">Lipid-anchor</topology>
    </subcellularLocation>
</comment>
<name>Y2368_STAAM</name>
<dbReference type="EMBL" id="BA000017">
    <property type="protein sequence ID" value="BAB58530.1"/>
    <property type="molecule type" value="Genomic_DNA"/>
</dbReference>
<dbReference type="RefSeq" id="WP_000827010.1">
    <property type="nucleotide sequence ID" value="NC_002758.2"/>
</dbReference>
<dbReference type="DNASU" id="1122393"/>
<dbReference type="KEGG" id="sav:SAV2368"/>
<dbReference type="HOGENOM" id="CLU_088585_0_0_9"/>
<dbReference type="Proteomes" id="UP000002481">
    <property type="component" value="Chromosome"/>
</dbReference>
<dbReference type="GO" id="GO:0005886">
    <property type="term" value="C:plasma membrane"/>
    <property type="evidence" value="ECO:0007669"/>
    <property type="project" value="UniProtKB-SubCell"/>
</dbReference>
<dbReference type="PROSITE" id="PS51257">
    <property type="entry name" value="PROKAR_LIPOPROTEIN"/>
    <property type="match status" value="1"/>
</dbReference>